<feature type="chain" id="PRO_0000333274" description="Small glutamine-rich tetratricopeptide repeat-containing protein">
    <location>
        <begin position="1"/>
        <end position="334"/>
    </location>
</feature>
<feature type="repeat" description="TPR 1">
    <location>
        <begin position="145"/>
        <end position="178"/>
    </location>
</feature>
<feature type="repeat" description="TPR 2">
    <location>
        <begin position="180"/>
        <end position="212"/>
    </location>
</feature>
<feature type="repeat" description="TPR 3">
    <location>
        <begin position="213"/>
        <end position="246"/>
    </location>
</feature>
<evidence type="ECO:0000305" key="1"/>
<keyword id="KW-0143">Chaperone</keyword>
<keyword id="KW-1185">Reference proteome</keyword>
<keyword id="KW-0677">Repeat</keyword>
<keyword id="KW-0802">TPR repeat</keyword>
<reference key="1">
    <citation type="journal article" date="2005" name="Nature">
        <title>The genome of the social amoeba Dictyostelium discoideum.</title>
        <authorList>
            <person name="Eichinger L."/>
            <person name="Pachebat J.A."/>
            <person name="Gloeckner G."/>
            <person name="Rajandream M.A."/>
            <person name="Sucgang R."/>
            <person name="Berriman M."/>
            <person name="Song J."/>
            <person name="Olsen R."/>
            <person name="Szafranski K."/>
            <person name="Xu Q."/>
            <person name="Tunggal B."/>
            <person name="Kummerfeld S."/>
            <person name="Madera M."/>
            <person name="Konfortov B.A."/>
            <person name="Rivero F."/>
            <person name="Bankier A.T."/>
            <person name="Lehmann R."/>
            <person name="Hamlin N."/>
            <person name="Davies R."/>
            <person name="Gaudet P."/>
            <person name="Fey P."/>
            <person name="Pilcher K."/>
            <person name="Chen G."/>
            <person name="Saunders D."/>
            <person name="Sodergren E.J."/>
            <person name="Davis P."/>
            <person name="Kerhornou A."/>
            <person name="Nie X."/>
            <person name="Hall N."/>
            <person name="Anjard C."/>
            <person name="Hemphill L."/>
            <person name="Bason N."/>
            <person name="Farbrother P."/>
            <person name="Desany B."/>
            <person name="Just E."/>
            <person name="Morio T."/>
            <person name="Rost R."/>
            <person name="Churcher C.M."/>
            <person name="Cooper J."/>
            <person name="Haydock S."/>
            <person name="van Driessche N."/>
            <person name="Cronin A."/>
            <person name="Goodhead I."/>
            <person name="Muzny D.M."/>
            <person name="Mourier T."/>
            <person name="Pain A."/>
            <person name="Lu M."/>
            <person name="Harper D."/>
            <person name="Lindsay R."/>
            <person name="Hauser H."/>
            <person name="James K.D."/>
            <person name="Quiles M."/>
            <person name="Madan Babu M."/>
            <person name="Saito T."/>
            <person name="Buchrieser C."/>
            <person name="Wardroper A."/>
            <person name="Felder M."/>
            <person name="Thangavelu M."/>
            <person name="Johnson D."/>
            <person name="Knights A."/>
            <person name="Loulseged H."/>
            <person name="Mungall K.L."/>
            <person name="Oliver K."/>
            <person name="Price C."/>
            <person name="Quail M.A."/>
            <person name="Urushihara H."/>
            <person name="Hernandez J."/>
            <person name="Rabbinowitsch E."/>
            <person name="Steffen D."/>
            <person name="Sanders M."/>
            <person name="Ma J."/>
            <person name="Kohara Y."/>
            <person name="Sharp S."/>
            <person name="Simmonds M.N."/>
            <person name="Spiegler S."/>
            <person name="Tivey A."/>
            <person name="Sugano S."/>
            <person name="White B."/>
            <person name="Walker D."/>
            <person name="Woodward J.R."/>
            <person name="Winckler T."/>
            <person name="Tanaka Y."/>
            <person name="Shaulsky G."/>
            <person name="Schleicher M."/>
            <person name="Weinstock G.M."/>
            <person name="Rosenthal A."/>
            <person name="Cox E.C."/>
            <person name="Chisholm R.L."/>
            <person name="Gibbs R.A."/>
            <person name="Loomis W.F."/>
            <person name="Platzer M."/>
            <person name="Kay R.R."/>
            <person name="Williams J.G."/>
            <person name="Dear P.H."/>
            <person name="Noegel A.A."/>
            <person name="Barrell B.G."/>
            <person name="Kuspa A."/>
        </authorList>
    </citation>
    <scope>NUCLEOTIDE SEQUENCE [LARGE SCALE GENOMIC DNA]</scope>
    <source>
        <strain>AX4</strain>
    </source>
</reference>
<reference key="2">
    <citation type="journal article" date="2006" name="Mol. Cell. Proteomics">
        <title>Proteomics fingerprinting of phagosome maturation and evidence for the role of a Galpha during uptake.</title>
        <authorList>
            <person name="Gotthardt D."/>
            <person name="Blancheteau V."/>
            <person name="Bosserhoff A."/>
            <person name="Ruppert T."/>
            <person name="Delorenzi M."/>
            <person name="Soldati T."/>
        </authorList>
    </citation>
    <scope>IDENTIFICATION BY MASS SPECTROMETRY [LARGE SCALE ANALYSIS]</scope>
    <source>
        <strain>AX2</strain>
    </source>
</reference>
<protein>
    <recommendedName>
        <fullName>Small glutamine-rich tetratricopeptide repeat-containing protein</fullName>
    </recommendedName>
</protein>
<dbReference type="EMBL" id="AAFI02000035">
    <property type="protein sequence ID" value="EAL67399.1"/>
    <property type="molecule type" value="Genomic_DNA"/>
</dbReference>
<dbReference type="RefSeq" id="XP_641391.1">
    <property type="nucleotide sequence ID" value="XM_636299.1"/>
</dbReference>
<dbReference type="SMR" id="Q54VG4"/>
<dbReference type="FunCoup" id="Q54VG4">
    <property type="interactions" value="359"/>
</dbReference>
<dbReference type="STRING" id="44689.Q54VG4"/>
<dbReference type="PaxDb" id="44689-DDB0238179"/>
<dbReference type="EnsemblProtists" id="EAL67399">
    <property type="protein sequence ID" value="EAL67399"/>
    <property type="gene ID" value="DDB_G0280345"/>
</dbReference>
<dbReference type="GeneID" id="8622525"/>
<dbReference type="KEGG" id="ddi:DDB_G0280345"/>
<dbReference type="dictyBase" id="DDB_G0280345">
    <property type="gene designation" value="sgtA"/>
</dbReference>
<dbReference type="VEuPathDB" id="AmoebaDB:DDB_G0280345"/>
<dbReference type="eggNOG" id="KOG0553">
    <property type="taxonomic scope" value="Eukaryota"/>
</dbReference>
<dbReference type="HOGENOM" id="CLU_044224_1_1_1"/>
<dbReference type="InParanoid" id="Q54VG4"/>
<dbReference type="OMA" id="LAIKDCH"/>
<dbReference type="PhylomeDB" id="Q54VG4"/>
<dbReference type="Reactome" id="R-DDI-9609523">
    <property type="pathway name" value="Insertion of tail-anchored proteins into the endoplasmic reticulum membrane"/>
</dbReference>
<dbReference type="PRO" id="PR:Q54VG4"/>
<dbReference type="Proteomes" id="UP000002195">
    <property type="component" value="Chromosome 3"/>
</dbReference>
<dbReference type="GO" id="GO:0016020">
    <property type="term" value="C:membrane"/>
    <property type="evidence" value="ECO:0000318"/>
    <property type="project" value="GO_Central"/>
</dbReference>
<dbReference type="GO" id="GO:0045335">
    <property type="term" value="C:phagocytic vesicle"/>
    <property type="evidence" value="ECO:0007005"/>
    <property type="project" value="dictyBase"/>
</dbReference>
<dbReference type="GO" id="GO:0072380">
    <property type="term" value="C:TRC complex"/>
    <property type="evidence" value="ECO:0000318"/>
    <property type="project" value="GO_Central"/>
</dbReference>
<dbReference type="GO" id="GO:0060090">
    <property type="term" value="F:molecular adaptor activity"/>
    <property type="evidence" value="ECO:0000318"/>
    <property type="project" value="GO_Central"/>
</dbReference>
<dbReference type="GO" id="GO:0006620">
    <property type="term" value="P:post-translational protein targeting to endoplasmic reticulum membrane"/>
    <property type="evidence" value="ECO:0000318"/>
    <property type="project" value="GO_Central"/>
</dbReference>
<dbReference type="Gene3D" id="1.20.5.420">
    <property type="entry name" value="Immunoglobulin FC, subunit C"/>
    <property type="match status" value="1"/>
</dbReference>
<dbReference type="Gene3D" id="1.25.40.10">
    <property type="entry name" value="Tetratricopeptide repeat domain"/>
    <property type="match status" value="1"/>
</dbReference>
<dbReference type="InterPro" id="IPR047150">
    <property type="entry name" value="SGT"/>
</dbReference>
<dbReference type="InterPro" id="IPR032374">
    <property type="entry name" value="SGTA_dimer"/>
</dbReference>
<dbReference type="InterPro" id="IPR011990">
    <property type="entry name" value="TPR-like_helical_dom_sf"/>
</dbReference>
<dbReference type="InterPro" id="IPR019734">
    <property type="entry name" value="TPR_rpt"/>
</dbReference>
<dbReference type="PANTHER" id="PTHR45831">
    <property type="entry name" value="LD24721P"/>
    <property type="match status" value="1"/>
</dbReference>
<dbReference type="PANTHER" id="PTHR45831:SF2">
    <property type="entry name" value="LD24721P"/>
    <property type="match status" value="1"/>
</dbReference>
<dbReference type="Pfam" id="PF16546">
    <property type="entry name" value="SGTA_dimer"/>
    <property type="match status" value="1"/>
</dbReference>
<dbReference type="Pfam" id="PF00515">
    <property type="entry name" value="TPR_1"/>
    <property type="match status" value="2"/>
</dbReference>
<dbReference type="Pfam" id="PF13181">
    <property type="entry name" value="TPR_8"/>
    <property type="match status" value="1"/>
</dbReference>
<dbReference type="SMART" id="SM00028">
    <property type="entry name" value="TPR"/>
    <property type="match status" value="3"/>
</dbReference>
<dbReference type="SUPFAM" id="SSF48452">
    <property type="entry name" value="TPR-like"/>
    <property type="match status" value="1"/>
</dbReference>
<dbReference type="PROSITE" id="PS50005">
    <property type="entry name" value="TPR"/>
    <property type="match status" value="3"/>
</dbReference>
<dbReference type="PROSITE" id="PS50293">
    <property type="entry name" value="TPR_REGION"/>
    <property type="match status" value="1"/>
</dbReference>
<comment type="function">
    <text>May act as a co-chaperone and regulate the ATPase activity of heat shock proteins.</text>
</comment>
<comment type="similarity">
    <text evidence="1">Belongs to the SGT family.</text>
</comment>
<gene>
    <name type="primary">sgt</name>
    <name type="synonym">sgtA</name>
    <name type="ORF">DDB_G0280345</name>
</gene>
<name>SGT_DICDI</name>
<accession>Q54VG4</accession>
<sequence>MASNKQKLAVSILNFLKVSMKEDAENAESLQVAVECIRDVFGVDENDSTLQVSAPLSEIFDKFIGENNTNTTTTTTTTTTKLSKEELLNQTYSEIPYELLESFKQFITILEQKGAFANEDSCETVIKATKQKFMESKAGEVKAIAEKLKNEGNAKLNEGKHQEALSCYNKAILYDNTNAIYFANRAATYSALQNFEKSIEDCLEAIKRNPNYGKAYTRMGSAYTSLGKFSEAMEAYNKAIELEPNNETFKASLANAERLAAAANNQAPAMPNIPGMPDLGGLDFGSLLSNPAIRGLANNLMSDPKMKEMMDNGDMASLLNNPDLLKMFGNLGKK</sequence>
<proteinExistence type="evidence at protein level"/>
<organism>
    <name type="scientific">Dictyostelium discoideum</name>
    <name type="common">Social amoeba</name>
    <dbReference type="NCBI Taxonomy" id="44689"/>
    <lineage>
        <taxon>Eukaryota</taxon>
        <taxon>Amoebozoa</taxon>
        <taxon>Evosea</taxon>
        <taxon>Eumycetozoa</taxon>
        <taxon>Dictyostelia</taxon>
        <taxon>Dictyosteliales</taxon>
        <taxon>Dictyosteliaceae</taxon>
        <taxon>Dictyostelium</taxon>
    </lineage>
</organism>